<name>KTHY_STRMU</name>
<dbReference type="EC" id="2.7.4.9" evidence="1"/>
<dbReference type="EMBL" id="AE014133">
    <property type="protein sequence ID" value="AAN59302.1"/>
    <property type="molecule type" value="Genomic_DNA"/>
</dbReference>
<dbReference type="RefSeq" id="NP_721996.1">
    <property type="nucleotide sequence ID" value="NC_004350.2"/>
</dbReference>
<dbReference type="RefSeq" id="WP_002262681.1">
    <property type="nucleotide sequence ID" value="NC_004350.2"/>
</dbReference>
<dbReference type="SMR" id="Q8DSU6"/>
<dbReference type="STRING" id="210007.SMU_1663"/>
<dbReference type="KEGG" id="smu:SMU_1663"/>
<dbReference type="PATRIC" id="fig|210007.7.peg.1485"/>
<dbReference type="eggNOG" id="COG0125">
    <property type="taxonomic scope" value="Bacteria"/>
</dbReference>
<dbReference type="HOGENOM" id="CLU_049131_0_2_9"/>
<dbReference type="OrthoDB" id="9774907at2"/>
<dbReference type="PhylomeDB" id="Q8DSU6"/>
<dbReference type="Proteomes" id="UP000002512">
    <property type="component" value="Chromosome"/>
</dbReference>
<dbReference type="GO" id="GO:0005829">
    <property type="term" value="C:cytosol"/>
    <property type="evidence" value="ECO:0007669"/>
    <property type="project" value="TreeGrafter"/>
</dbReference>
<dbReference type="GO" id="GO:0005524">
    <property type="term" value="F:ATP binding"/>
    <property type="evidence" value="ECO:0007669"/>
    <property type="project" value="UniProtKB-UniRule"/>
</dbReference>
<dbReference type="GO" id="GO:0004798">
    <property type="term" value="F:dTMP kinase activity"/>
    <property type="evidence" value="ECO:0007669"/>
    <property type="project" value="UniProtKB-UniRule"/>
</dbReference>
<dbReference type="GO" id="GO:0006233">
    <property type="term" value="P:dTDP biosynthetic process"/>
    <property type="evidence" value="ECO:0007669"/>
    <property type="project" value="InterPro"/>
</dbReference>
<dbReference type="GO" id="GO:0006235">
    <property type="term" value="P:dTTP biosynthetic process"/>
    <property type="evidence" value="ECO:0007669"/>
    <property type="project" value="UniProtKB-UniRule"/>
</dbReference>
<dbReference type="GO" id="GO:0006227">
    <property type="term" value="P:dUDP biosynthetic process"/>
    <property type="evidence" value="ECO:0007669"/>
    <property type="project" value="TreeGrafter"/>
</dbReference>
<dbReference type="CDD" id="cd01672">
    <property type="entry name" value="TMPK"/>
    <property type="match status" value="1"/>
</dbReference>
<dbReference type="FunFam" id="3.40.50.300:FF:000225">
    <property type="entry name" value="Thymidylate kinase"/>
    <property type="match status" value="1"/>
</dbReference>
<dbReference type="Gene3D" id="3.40.50.300">
    <property type="entry name" value="P-loop containing nucleotide triphosphate hydrolases"/>
    <property type="match status" value="1"/>
</dbReference>
<dbReference type="HAMAP" id="MF_00165">
    <property type="entry name" value="Thymidylate_kinase"/>
    <property type="match status" value="1"/>
</dbReference>
<dbReference type="InterPro" id="IPR027417">
    <property type="entry name" value="P-loop_NTPase"/>
</dbReference>
<dbReference type="InterPro" id="IPR039430">
    <property type="entry name" value="Thymidylate_kin-like_dom"/>
</dbReference>
<dbReference type="InterPro" id="IPR018095">
    <property type="entry name" value="Thymidylate_kin_CS"/>
</dbReference>
<dbReference type="InterPro" id="IPR018094">
    <property type="entry name" value="Thymidylate_kinase"/>
</dbReference>
<dbReference type="NCBIfam" id="TIGR00041">
    <property type="entry name" value="DTMP_kinase"/>
    <property type="match status" value="1"/>
</dbReference>
<dbReference type="PANTHER" id="PTHR10344">
    <property type="entry name" value="THYMIDYLATE KINASE"/>
    <property type="match status" value="1"/>
</dbReference>
<dbReference type="PANTHER" id="PTHR10344:SF4">
    <property type="entry name" value="UMP-CMP KINASE 2, MITOCHONDRIAL"/>
    <property type="match status" value="1"/>
</dbReference>
<dbReference type="Pfam" id="PF02223">
    <property type="entry name" value="Thymidylate_kin"/>
    <property type="match status" value="1"/>
</dbReference>
<dbReference type="SUPFAM" id="SSF52540">
    <property type="entry name" value="P-loop containing nucleoside triphosphate hydrolases"/>
    <property type="match status" value="1"/>
</dbReference>
<dbReference type="PROSITE" id="PS01331">
    <property type="entry name" value="THYMIDYLATE_KINASE"/>
    <property type="match status" value="1"/>
</dbReference>
<proteinExistence type="inferred from homology"/>
<evidence type="ECO:0000255" key="1">
    <source>
        <dbReference type="HAMAP-Rule" id="MF_00165"/>
    </source>
</evidence>
<feature type="chain" id="PRO_0000155348" description="Thymidylate kinase">
    <location>
        <begin position="1"/>
        <end position="212"/>
    </location>
</feature>
<feature type="binding site" evidence="1">
    <location>
        <begin position="11"/>
        <end position="18"/>
    </location>
    <ligand>
        <name>ATP</name>
        <dbReference type="ChEBI" id="CHEBI:30616"/>
    </ligand>
</feature>
<protein>
    <recommendedName>
        <fullName evidence="1">Thymidylate kinase</fullName>
        <ecNumber evidence="1">2.7.4.9</ecNumber>
    </recommendedName>
    <alternativeName>
        <fullName evidence="1">dTMP kinase</fullName>
    </alternativeName>
</protein>
<keyword id="KW-0067">ATP-binding</keyword>
<keyword id="KW-0418">Kinase</keyword>
<keyword id="KW-0545">Nucleotide biosynthesis</keyword>
<keyword id="KW-0547">Nucleotide-binding</keyword>
<keyword id="KW-1185">Reference proteome</keyword>
<keyword id="KW-0808">Transferase</keyword>
<reference key="1">
    <citation type="journal article" date="2002" name="Proc. Natl. Acad. Sci. U.S.A.">
        <title>Genome sequence of Streptococcus mutans UA159, a cariogenic dental pathogen.</title>
        <authorList>
            <person name="Ajdic D.J."/>
            <person name="McShan W.M."/>
            <person name="McLaughlin R.E."/>
            <person name="Savic G."/>
            <person name="Chang J."/>
            <person name="Carson M.B."/>
            <person name="Primeaux C."/>
            <person name="Tian R."/>
            <person name="Kenton S."/>
            <person name="Jia H.G."/>
            <person name="Lin S.P."/>
            <person name="Qian Y."/>
            <person name="Li S."/>
            <person name="Zhu H."/>
            <person name="Najar F.Z."/>
            <person name="Lai H."/>
            <person name="White J."/>
            <person name="Roe B.A."/>
            <person name="Ferretti J.J."/>
        </authorList>
    </citation>
    <scope>NUCLEOTIDE SEQUENCE [LARGE SCALE GENOMIC DNA]</scope>
    <source>
        <strain>ATCC 700610 / UA159</strain>
    </source>
</reference>
<accession>Q8DSU6</accession>
<gene>
    <name evidence="1" type="primary">tmk</name>
    <name type="synonym">kthY</name>
    <name type="ordered locus">SMU_1663</name>
</gene>
<comment type="function">
    <text evidence="1">Phosphorylation of dTMP to form dTDP in both de novo and salvage pathways of dTTP synthesis.</text>
</comment>
<comment type="catalytic activity">
    <reaction evidence="1">
        <text>dTMP + ATP = dTDP + ADP</text>
        <dbReference type="Rhea" id="RHEA:13517"/>
        <dbReference type="ChEBI" id="CHEBI:30616"/>
        <dbReference type="ChEBI" id="CHEBI:58369"/>
        <dbReference type="ChEBI" id="CHEBI:63528"/>
        <dbReference type="ChEBI" id="CHEBI:456216"/>
        <dbReference type="EC" id="2.7.4.9"/>
    </reaction>
</comment>
<comment type="similarity">
    <text evidence="1">Belongs to the thymidylate kinase family.</text>
</comment>
<organism>
    <name type="scientific">Streptococcus mutans serotype c (strain ATCC 700610 / UA159)</name>
    <dbReference type="NCBI Taxonomy" id="210007"/>
    <lineage>
        <taxon>Bacteria</taxon>
        <taxon>Bacillati</taxon>
        <taxon>Bacillota</taxon>
        <taxon>Bacilli</taxon>
        <taxon>Lactobacillales</taxon>
        <taxon>Streptococcaceae</taxon>
        <taxon>Streptococcus</taxon>
    </lineage>
</organism>
<sequence length="212" mass="23956">MTKGIFISFEGPDGAGKTTVLEAILPQLKKLVAKEVITTREPGGVAIAESIRDLILDVNHTNMDDKTELLLYIAARRQHLVERILPELKKGNLVLVDRFIDSSVAYQGYGRGLDADAVTWLNNFATDGLQPDLTLYFDVDSQIGLTRIEKNKEREVNRLDLEQLDMHRRVRSGYLKLAQENPDRIVTIDAARPLEEVITDALFIIKQRCLEK</sequence>